<protein>
    <recommendedName>
        <fullName>Probable membrane transporter protein ORF9</fullName>
    </recommendedName>
    <alternativeName>
        <fullName>ORF9</fullName>
    </alternativeName>
</protein>
<evidence type="ECO:0000255" key="1"/>
<evidence type="ECO:0000305" key="2"/>
<comment type="subcellular location">
    <subcellularLocation>
        <location evidence="2">Cell membrane</location>
        <topology evidence="2">Multi-pass membrane protein</topology>
    </subcellularLocation>
</comment>
<comment type="similarity">
    <text evidence="2">Belongs to the 4-toluene sulfonate uptake permease (TSUP) (TC 2.A.102) family.</text>
</comment>
<comment type="caution">
    <text evidence="2">Was originally thought to originate from Pseudomonas denitrificans, but similarity searches show that the sequence is much closer to Sinorhizobium. The entry's taxonomy has been changed.</text>
</comment>
<name>YCB9_SINSX</name>
<keyword id="KW-1003">Cell membrane</keyword>
<keyword id="KW-0472">Membrane</keyword>
<keyword id="KW-0812">Transmembrane</keyword>
<keyword id="KW-1133">Transmembrane helix</keyword>
<keyword id="KW-0813">Transport</keyword>
<sequence>MQDLAFHLLAFLFVAAFIAGFIDSIAGGGGMITIPAMLIAGIPPLQTLGTNKLQGLFGSGSATLSYARRGHVNLKEQLPMALMSAAGAVLGALLATIVPGDVLKAILPFLLIAIALYFGLKPNMGDVDQHSRVTPFVFTLTLVPLIGFYDGVFGPGTGSFFMLGFVTLAGFGVLKATAHTKFLNFGSNVGAFGVFLFFGAVLWKVGLLMGLGQFLGAQVGSRYAMAKGAKIIKPLLVIVSIALAIRLLADPTHPLRIWLGH</sequence>
<accession>P29942</accession>
<reference key="1">
    <citation type="journal article" date="1991" name="J. Bacteriol.">
        <title>Nucleotide sequence and genetic analysis of a 13.1-kilobase-pair Pseudomonas denitrificans DNA fragment containing five cob genes and identification of structural genes encoding Cob(I)alamin adenosyltransferase, cobyric acid synthase, and bifunctional cobinamide kinase-cobinamide phosphate guanylyltransferase.</title>
        <authorList>
            <person name="Crouzet J."/>
            <person name="Levy-Schil S."/>
            <person name="Cameron B."/>
            <person name="Cauchois L."/>
            <person name="Rigault S."/>
            <person name="Rouyez M.-C."/>
            <person name="Blanche F."/>
            <person name="Debussche L."/>
            <person name="Thibaut D."/>
        </authorList>
    </citation>
    <scope>NUCLEOTIDE SEQUENCE [GENOMIC DNA]</scope>
    <source>
        <strain>SC510</strain>
    </source>
</reference>
<dbReference type="EMBL" id="M62866">
    <property type="protein sequence ID" value="AAA25785.1"/>
    <property type="molecule type" value="Genomic_DNA"/>
</dbReference>
<dbReference type="GO" id="GO:0005886">
    <property type="term" value="C:plasma membrane"/>
    <property type="evidence" value="ECO:0007669"/>
    <property type="project" value="UniProtKB-SubCell"/>
</dbReference>
<dbReference type="InterPro" id="IPR002781">
    <property type="entry name" value="TM_pro_TauE-like"/>
</dbReference>
<dbReference type="InterPro" id="IPR052017">
    <property type="entry name" value="TSUP"/>
</dbReference>
<dbReference type="PANTHER" id="PTHR30269:SF0">
    <property type="entry name" value="MEMBRANE TRANSPORTER PROTEIN YFCA-RELATED"/>
    <property type="match status" value="1"/>
</dbReference>
<dbReference type="PANTHER" id="PTHR30269">
    <property type="entry name" value="TRANSMEMBRANE PROTEIN YFCA"/>
    <property type="match status" value="1"/>
</dbReference>
<dbReference type="Pfam" id="PF01925">
    <property type="entry name" value="TauE"/>
    <property type="match status" value="1"/>
</dbReference>
<proteinExistence type="inferred from homology"/>
<feature type="chain" id="PRO_0000066169" description="Probable membrane transporter protein ORF9">
    <location>
        <begin position="1"/>
        <end position="261"/>
    </location>
</feature>
<feature type="transmembrane region" description="Helical" evidence="1">
    <location>
        <begin position="8"/>
        <end position="28"/>
    </location>
</feature>
<feature type="transmembrane region" description="Helical" evidence="1">
    <location>
        <begin position="29"/>
        <end position="49"/>
    </location>
</feature>
<feature type="transmembrane region" description="Helical" evidence="1">
    <location>
        <begin position="78"/>
        <end position="98"/>
    </location>
</feature>
<feature type="transmembrane region" description="Helical" evidence="1">
    <location>
        <begin position="100"/>
        <end position="120"/>
    </location>
</feature>
<feature type="transmembrane region" description="Helical" evidence="1">
    <location>
        <begin position="133"/>
        <end position="151"/>
    </location>
</feature>
<feature type="transmembrane region" description="Helical" evidence="1">
    <location>
        <begin position="152"/>
        <end position="171"/>
    </location>
</feature>
<feature type="transmembrane region" description="Helical" evidence="1">
    <location>
        <begin position="189"/>
        <end position="209"/>
    </location>
</feature>
<feature type="transmembrane region" description="Helical" evidence="1">
    <location>
        <begin position="231"/>
        <end position="251"/>
    </location>
</feature>
<organism>
    <name type="scientific">Sinorhizobium sp</name>
    <dbReference type="NCBI Taxonomy" id="42445"/>
    <lineage>
        <taxon>Bacteria</taxon>
        <taxon>Pseudomonadati</taxon>
        <taxon>Pseudomonadota</taxon>
        <taxon>Alphaproteobacteria</taxon>
        <taxon>Hyphomicrobiales</taxon>
        <taxon>Rhizobiaceae</taxon>
        <taxon>Sinorhizobium/Ensifer group</taxon>
        <taxon>Sinorhizobium</taxon>
    </lineage>
</organism>